<keyword id="KW-0963">Cytoplasm</keyword>
<keyword id="KW-0396">Initiation factor</keyword>
<keyword id="KW-0648">Protein biosynthesis</keyword>
<keyword id="KW-1185">Reference proteome</keyword>
<keyword id="KW-0694">RNA-binding</keyword>
<keyword id="KW-0699">rRNA-binding</keyword>
<comment type="function">
    <text evidence="1">One of the essential components for the initiation of protein synthesis. Stabilizes the binding of IF-2 and IF-3 on the 30S subunit to which N-formylmethionyl-tRNA(fMet) subsequently binds. Helps modulate mRNA selection, yielding the 30S pre-initiation complex (PIC). Upon addition of the 50S ribosomal subunit IF-1, IF-2 and IF-3 are released leaving the mature 70S translation initiation complex.</text>
</comment>
<comment type="subunit">
    <text evidence="1">Component of the 30S ribosomal translation pre-initiation complex which assembles on the 30S ribosome in the order IF-2 and IF-3, IF-1 and N-formylmethionyl-tRNA(fMet); mRNA recruitment can occur at any time during PIC assembly.</text>
</comment>
<comment type="subcellular location">
    <subcellularLocation>
        <location evidence="1">Cytoplasm</location>
    </subcellularLocation>
</comment>
<comment type="similarity">
    <text evidence="1">Belongs to the IF-1 family.</text>
</comment>
<name>IF1_VESOH</name>
<gene>
    <name evidence="1" type="primary">infA</name>
    <name type="ordered locus">COSY_0775</name>
</gene>
<proteinExistence type="inferred from homology"/>
<organism>
    <name type="scientific">Vesicomyosocius okutanii subsp. Calyptogena okutanii (strain HA)</name>
    <dbReference type="NCBI Taxonomy" id="412965"/>
    <lineage>
        <taxon>Bacteria</taxon>
        <taxon>Pseudomonadati</taxon>
        <taxon>Pseudomonadota</taxon>
        <taxon>Gammaproteobacteria</taxon>
        <taxon>Candidatus Pseudothioglobaceae</taxon>
        <taxon>Candidatus Vesicomyosocius</taxon>
    </lineage>
</organism>
<evidence type="ECO:0000255" key="1">
    <source>
        <dbReference type="HAMAP-Rule" id="MF_00075"/>
    </source>
</evidence>
<feature type="chain" id="PRO_0000338947" description="Translation initiation factor IF-1">
    <location>
        <begin position="1"/>
        <end position="72"/>
    </location>
</feature>
<feature type="domain" description="S1-like" evidence="1">
    <location>
        <begin position="1"/>
        <end position="72"/>
    </location>
</feature>
<protein>
    <recommendedName>
        <fullName evidence="1">Translation initiation factor IF-1</fullName>
    </recommendedName>
</protein>
<sequence>MSKSDYIELEGFVKEKLPNTTFMVELENGHCILAHISGKIRKHYIRILPGDKVTVEMTPYDLTKGRITFRHK</sequence>
<reference key="1">
    <citation type="journal article" date="2007" name="Curr. Biol.">
        <title>Reduced genome of the thioautotrophic intracellular symbiont in a deep-sea clam, Calyptogena okutanii.</title>
        <authorList>
            <person name="Kuwahara H."/>
            <person name="Yoshida T."/>
            <person name="Takaki Y."/>
            <person name="Shimamura S."/>
            <person name="Nishi S."/>
            <person name="Harada M."/>
            <person name="Matsuyama K."/>
            <person name="Takishita K."/>
            <person name="Kawato M."/>
            <person name="Uematsu K."/>
            <person name="Fujiwara Y."/>
            <person name="Sato T."/>
            <person name="Kato C."/>
            <person name="Kitagawa M."/>
            <person name="Kato I."/>
            <person name="Maruyama T."/>
        </authorList>
    </citation>
    <scope>NUCLEOTIDE SEQUENCE [LARGE SCALE GENOMIC DNA]</scope>
    <source>
        <strain>HA</strain>
    </source>
</reference>
<accession>A5CW05</accession>
<dbReference type="EMBL" id="AP009247">
    <property type="protein sequence ID" value="BAF61881.1"/>
    <property type="molecule type" value="Genomic_DNA"/>
</dbReference>
<dbReference type="RefSeq" id="WP_011930150.1">
    <property type="nucleotide sequence ID" value="NC_009465.1"/>
</dbReference>
<dbReference type="SMR" id="A5CW05"/>
<dbReference type="STRING" id="412965.COSY_0775"/>
<dbReference type="KEGG" id="vok:COSY_0775"/>
<dbReference type="eggNOG" id="COG0361">
    <property type="taxonomic scope" value="Bacteria"/>
</dbReference>
<dbReference type="HOGENOM" id="CLU_151267_1_0_6"/>
<dbReference type="OrthoDB" id="9803250at2"/>
<dbReference type="Proteomes" id="UP000000247">
    <property type="component" value="Chromosome"/>
</dbReference>
<dbReference type="GO" id="GO:0005829">
    <property type="term" value="C:cytosol"/>
    <property type="evidence" value="ECO:0007669"/>
    <property type="project" value="TreeGrafter"/>
</dbReference>
<dbReference type="GO" id="GO:0043022">
    <property type="term" value="F:ribosome binding"/>
    <property type="evidence" value="ECO:0007669"/>
    <property type="project" value="UniProtKB-UniRule"/>
</dbReference>
<dbReference type="GO" id="GO:0019843">
    <property type="term" value="F:rRNA binding"/>
    <property type="evidence" value="ECO:0007669"/>
    <property type="project" value="UniProtKB-UniRule"/>
</dbReference>
<dbReference type="GO" id="GO:0003743">
    <property type="term" value="F:translation initiation factor activity"/>
    <property type="evidence" value="ECO:0007669"/>
    <property type="project" value="UniProtKB-UniRule"/>
</dbReference>
<dbReference type="CDD" id="cd04451">
    <property type="entry name" value="S1_IF1"/>
    <property type="match status" value="1"/>
</dbReference>
<dbReference type="FunFam" id="2.40.50.140:FF:000002">
    <property type="entry name" value="Translation initiation factor IF-1"/>
    <property type="match status" value="1"/>
</dbReference>
<dbReference type="Gene3D" id="2.40.50.140">
    <property type="entry name" value="Nucleic acid-binding proteins"/>
    <property type="match status" value="1"/>
</dbReference>
<dbReference type="HAMAP" id="MF_00075">
    <property type="entry name" value="IF_1"/>
    <property type="match status" value="1"/>
</dbReference>
<dbReference type="InterPro" id="IPR012340">
    <property type="entry name" value="NA-bd_OB-fold"/>
</dbReference>
<dbReference type="InterPro" id="IPR006196">
    <property type="entry name" value="RNA-binding_domain_S1_IF1"/>
</dbReference>
<dbReference type="InterPro" id="IPR003029">
    <property type="entry name" value="S1_domain"/>
</dbReference>
<dbReference type="InterPro" id="IPR004368">
    <property type="entry name" value="TIF_IF1"/>
</dbReference>
<dbReference type="NCBIfam" id="TIGR00008">
    <property type="entry name" value="infA"/>
    <property type="match status" value="1"/>
</dbReference>
<dbReference type="PANTHER" id="PTHR33370">
    <property type="entry name" value="TRANSLATION INITIATION FACTOR IF-1, CHLOROPLASTIC"/>
    <property type="match status" value="1"/>
</dbReference>
<dbReference type="PANTHER" id="PTHR33370:SF1">
    <property type="entry name" value="TRANSLATION INITIATION FACTOR IF-1, CHLOROPLASTIC"/>
    <property type="match status" value="1"/>
</dbReference>
<dbReference type="Pfam" id="PF01176">
    <property type="entry name" value="eIF-1a"/>
    <property type="match status" value="1"/>
</dbReference>
<dbReference type="SMART" id="SM00316">
    <property type="entry name" value="S1"/>
    <property type="match status" value="1"/>
</dbReference>
<dbReference type="SUPFAM" id="SSF50249">
    <property type="entry name" value="Nucleic acid-binding proteins"/>
    <property type="match status" value="1"/>
</dbReference>
<dbReference type="PROSITE" id="PS50832">
    <property type="entry name" value="S1_IF1_TYPE"/>
    <property type="match status" value="1"/>
</dbReference>